<dbReference type="EMBL" id="AB222181">
    <property type="protein sequence ID" value="BAE16332.1"/>
    <property type="molecule type" value="mRNA"/>
</dbReference>
<dbReference type="RefSeq" id="XP_032248399.1">
    <property type="nucleotide sequence ID" value="XM_032392508.1"/>
</dbReference>
<dbReference type="RefSeq" id="XP_032248400.1">
    <property type="nucleotide sequence ID" value="XM_032392509.1"/>
</dbReference>
<dbReference type="SMR" id="Q4ADG6"/>
<dbReference type="GeneID" id="116624515"/>
<dbReference type="GO" id="GO:0005737">
    <property type="term" value="C:cytoplasm"/>
    <property type="evidence" value="ECO:0000250"/>
    <property type="project" value="UniProtKB"/>
</dbReference>
<dbReference type="GO" id="GO:0005789">
    <property type="term" value="C:endoplasmic reticulum membrane"/>
    <property type="evidence" value="ECO:0007669"/>
    <property type="project" value="UniProtKB-SubCell"/>
</dbReference>
<dbReference type="GO" id="GO:0005874">
    <property type="term" value="C:microtubule"/>
    <property type="evidence" value="ECO:0007669"/>
    <property type="project" value="TreeGrafter"/>
</dbReference>
<dbReference type="GO" id="GO:0005634">
    <property type="term" value="C:nucleus"/>
    <property type="evidence" value="ECO:0007669"/>
    <property type="project" value="TreeGrafter"/>
</dbReference>
<dbReference type="GO" id="GO:0048471">
    <property type="term" value="C:perinuclear region of cytoplasm"/>
    <property type="evidence" value="ECO:0007669"/>
    <property type="project" value="UniProtKB-SubCell"/>
</dbReference>
<dbReference type="GO" id="GO:0005886">
    <property type="term" value="C:plasma membrane"/>
    <property type="evidence" value="ECO:0007669"/>
    <property type="project" value="TreeGrafter"/>
</dbReference>
<dbReference type="GO" id="GO:0098793">
    <property type="term" value="C:presynapse"/>
    <property type="evidence" value="ECO:0007669"/>
    <property type="project" value="GOC"/>
</dbReference>
<dbReference type="GO" id="GO:0005525">
    <property type="term" value="F:GTP binding"/>
    <property type="evidence" value="ECO:0007669"/>
    <property type="project" value="UniProtKB-KW"/>
</dbReference>
<dbReference type="GO" id="GO:0003924">
    <property type="term" value="F:GTPase activity"/>
    <property type="evidence" value="ECO:0007669"/>
    <property type="project" value="InterPro"/>
</dbReference>
<dbReference type="GO" id="GO:0008017">
    <property type="term" value="F:microtubule binding"/>
    <property type="evidence" value="ECO:0007669"/>
    <property type="project" value="TreeGrafter"/>
</dbReference>
<dbReference type="GO" id="GO:0051607">
    <property type="term" value="P:defense response to virus"/>
    <property type="evidence" value="ECO:0007669"/>
    <property type="project" value="UniProtKB-KW"/>
</dbReference>
<dbReference type="GO" id="GO:0045087">
    <property type="term" value="P:innate immune response"/>
    <property type="evidence" value="ECO:0007669"/>
    <property type="project" value="UniProtKB-KW"/>
</dbReference>
<dbReference type="GO" id="GO:0031623">
    <property type="term" value="P:receptor internalization"/>
    <property type="evidence" value="ECO:0007669"/>
    <property type="project" value="TreeGrafter"/>
</dbReference>
<dbReference type="GO" id="GO:0016185">
    <property type="term" value="P:synaptic vesicle budding from presynaptic endocytic zone membrane"/>
    <property type="evidence" value="ECO:0007669"/>
    <property type="project" value="TreeGrafter"/>
</dbReference>
<dbReference type="CDD" id="cd08771">
    <property type="entry name" value="DLP_1"/>
    <property type="match status" value="1"/>
</dbReference>
<dbReference type="FunFam" id="1.20.120.1240:FF:000007">
    <property type="entry name" value="Interferon-induced GTP-binding protein Mx1"/>
    <property type="match status" value="1"/>
</dbReference>
<dbReference type="FunFam" id="3.40.50.300:FF:000621">
    <property type="entry name" value="Interferon-induced GTP-binding protein Mx1"/>
    <property type="match status" value="1"/>
</dbReference>
<dbReference type="Gene3D" id="1.20.120.1240">
    <property type="entry name" value="Dynamin, middle domain"/>
    <property type="match status" value="1"/>
</dbReference>
<dbReference type="Gene3D" id="3.40.50.300">
    <property type="entry name" value="P-loop containing nucleotide triphosphate hydrolases"/>
    <property type="match status" value="1"/>
</dbReference>
<dbReference type="InterPro" id="IPR022812">
    <property type="entry name" value="Dynamin"/>
</dbReference>
<dbReference type="InterPro" id="IPR001401">
    <property type="entry name" value="Dynamin_GTPase"/>
</dbReference>
<dbReference type="InterPro" id="IPR019762">
    <property type="entry name" value="Dynamin_GTPase_CS"/>
</dbReference>
<dbReference type="InterPro" id="IPR045063">
    <property type="entry name" value="Dynamin_N"/>
</dbReference>
<dbReference type="InterPro" id="IPR000375">
    <property type="entry name" value="Dynamin_stalk"/>
</dbReference>
<dbReference type="InterPro" id="IPR030381">
    <property type="entry name" value="G_DYNAMIN_dom"/>
</dbReference>
<dbReference type="InterPro" id="IPR003130">
    <property type="entry name" value="GED"/>
</dbReference>
<dbReference type="InterPro" id="IPR020850">
    <property type="entry name" value="GED_dom"/>
</dbReference>
<dbReference type="InterPro" id="IPR027417">
    <property type="entry name" value="P-loop_NTPase"/>
</dbReference>
<dbReference type="PANTHER" id="PTHR11566">
    <property type="entry name" value="DYNAMIN"/>
    <property type="match status" value="1"/>
</dbReference>
<dbReference type="PANTHER" id="PTHR11566:SF217">
    <property type="entry name" value="INTERFERON-INDUCED GTP-BINDING PROTEIN MX1"/>
    <property type="match status" value="1"/>
</dbReference>
<dbReference type="Pfam" id="PF01031">
    <property type="entry name" value="Dynamin_M"/>
    <property type="match status" value="1"/>
</dbReference>
<dbReference type="Pfam" id="PF00350">
    <property type="entry name" value="Dynamin_N"/>
    <property type="match status" value="1"/>
</dbReference>
<dbReference type="Pfam" id="PF02212">
    <property type="entry name" value="GED"/>
    <property type="match status" value="1"/>
</dbReference>
<dbReference type="PRINTS" id="PR00195">
    <property type="entry name" value="DYNAMIN"/>
</dbReference>
<dbReference type="SMART" id="SM00053">
    <property type="entry name" value="DYNc"/>
    <property type="match status" value="1"/>
</dbReference>
<dbReference type="SMART" id="SM00302">
    <property type="entry name" value="GED"/>
    <property type="match status" value="1"/>
</dbReference>
<dbReference type="SUPFAM" id="SSF52540">
    <property type="entry name" value="P-loop containing nucleoside triphosphate hydrolases"/>
    <property type="match status" value="1"/>
</dbReference>
<dbReference type="PROSITE" id="PS00410">
    <property type="entry name" value="G_DYNAMIN_1"/>
    <property type="match status" value="1"/>
</dbReference>
<dbReference type="PROSITE" id="PS51718">
    <property type="entry name" value="G_DYNAMIN_2"/>
    <property type="match status" value="1"/>
</dbReference>
<dbReference type="PROSITE" id="PS51388">
    <property type="entry name" value="GED"/>
    <property type="match status" value="1"/>
</dbReference>
<keyword id="KW-0007">Acetylation</keyword>
<keyword id="KW-0051">Antiviral defense</keyword>
<keyword id="KW-0963">Cytoplasm</keyword>
<keyword id="KW-0256">Endoplasmic reticulum</keyword>
<keyword id="KW-0342">GTP-binding</keyword>
<keyword id="KW-0391">Immunity</keyword>
<keyword id="KW-0399">Innate immunity</keyword>
<keyword id="KW-0472">Membrane</keyword>
<keyword id="KW-0547">Nucleotide-binding</keyword>
<keyword id="KW-0832">Ubl conjugation</keyword>
<feature type="chain" id="PRO_0000319955" description="Interferon-induced GTP-binding protein Mx1">
    <location>
        <begin position="1"/>
        <end position="659"/>
    </location>
</feature>
<feature type="domain" description="Dynamin-type G" evidence="5">
    <location>
        <begin position="65"/>
        <end position="338"/>
    </location>
</feature>
<feature type="domain" description="GED" evidence="4">
    <location>
        <begin position="571"/>
        <end position="659"/>
    </location>
</feature>
<feature type="region of interest" description="Disordered" evidence="6">
    <location>
        <begin position="1"/>
        <end position="40"/>
    </location>
</feature>
<feature type="region of interest" description="G1 motif" evidence="5">
    <location>
        <begin position="75"/>
        <end position="82"/>
    </location>
</feature>
<feature type="region of interest" description="G2 motif" evidence="5">
    <location>
        <begin position="100"/>
        <end position="102"/>
    </location>
</feature>
<feature type="region of interest" description="G3 motif" evidence="5">
    <location>
        <begin position="176"/>
        <end position="179"/>
    </location>
</feature>
<feature type="region of interest" description="G4 motif" evidence="5">
    <location>
        <begin position="245"/>
        <end position="248"/>
    </location>
</feature>
<feature type="region of interest" description="G5 motif" evidence="5">
    <location>
        <begin position="277"/>
        <end position="280"/>
    </location>
</feature>
<feature type="region of interest" description="Bundle signaling element (BSE)" evidence="1">
    <location>
        <begin position="339"/>
        <end position="364"/>
    </location>
</feature>
<feature type="region of interest" description="Middle domain" evidence="1">
    <location>
        <begin position="364"/>
        <end position="531"/>
    </location>
</feature>
<feature type="region of interest" description="Stalk" evidence="1">
    <location>
        <begin position="365"/>
        <end position="629"/>
    </location>
</feature>
<feature type="region of interest" description="Critical for lipid-binding" evidence="1">
    <location>
        <begin position="552"/>
        <end position="555"/>
    </location>
</feature>
<feature type="binding site" evidence="3">
    <location>
        <begin position="75"/>
        <end position="82"/>
    </location>
    <ligand>
        <name>GTP</name>
        <dbReference type="ChEBI" id="CHEBI:37565"/>
    </ligand>
</feature>
<feature type="binding site" evidence="3">
    <location>
        <begin position="176"/>
        <end position="180"/>
    </location>
    <ligand>
        <name>GTP</name>
        <dbReference type="ChEBI" id="CHEBI:37565"/>
    </ligand>
</feature>
<feature type="binding site" evidence="3">
    <location>
        <begin position="245"/>
        <end position="248"/>
    </location>
    <ligand>
        <name>GTP</name>
        <dbReference type="ChEBI" id="CHEBI:37565"/>
    </ligand>
</feature>
<feature type="modified residue" description="N-acetylmethionine" evidence="2">
    <location>
        <position position="1"/>
    </location>
</feature>
<comment type="function">
    <text evidence="1">Interferon-induced dynamin-like GTPase with antiviral activity.</text>
</comment>
<comment type="subunit">
    <text evidence="1">Homooligomer. Oligomerizes into multimeric filamentous or ring-like structures by virtue of its stalk domain. Oligomerization is critical for GTPase activity, protein stability, and recognition of viral target structures (By similarity). Interacts with TRPC1, TRPC3, TRPC4, TRPC5, TRPC6 and TRPC7 (By similarity). Interacts with HSPA5 (By similarity). Interacts with TUBB/TUBB5 (By similarity). Interacts with DDX39A and DDX39B (By similarity).</text>
</comment>
<comment type="subcellular location">
    <subcellularLocation>
        <location evidence="1">Cytoplasm</location>
    </subcellularLocation>
    <subcellularLocation>
        <location evidence="1">Endoplasmic reticulum membrane</location>
        <topology evidence="1">Peripheral membrane protein</topology>
        <orientation evidence="1">Cytoplasmic side</orientation>
    </subcellularLocation>
    <subcellularLocation>
        <location evidence="1">Cytoplasm</location>
        <location evidence="1">Perinuclear region</location>
    </subcellularLocation>
    <text evidence="1">Binds preferentially to negatively charged phospholipids.</text>
</comment>
<comment type="induction">
    <text evidence="7">By type I and type III interferons.</text>
</comment>
<comment type="domain">
    <text evidence="1">The C-terminal GTPase effector domain (GED) is involved in oligomerization and viral target recognition.</text>
</comment>
<comment type="domain">
    <text evidence="1">The middle domain mediates self-assembly and oligomerization.</text>
</comment>
<comment type="PTM">
    <text evidence="1">ISGylated.</text>
</comment>
<comment type="similarity">
    <text evidence="5">Belongs to the TRAFAC class dynamin-like GTPase superfamily. Dynamin/Fzo/YdjA family.</text>
</comment>
<name>MX1_PHOVI</name>
<evidence type="ECO:0000250" key="1"/>
<evidence type="ECO:0000250" key="2">
    <source>
        <dbReference type="UniProtKB" id="P20591"/>
    </source>
</evidence>
<evidence type="ECO:0000255" key="3"/>
<evidence type="ECO:0000255" key="4">
    <source>
        <dbReference type="PROSITE-ProRule" id="PRU00720"/>
    </source>
</evidence>
<evidence type="ECO:0000255" key="5">
    <source>
        <dbReference type="PROSITE-ProRule" id="PRU01055"/>
    </source>
</evidence>
<evidence type="ECO:0000256" key="6">
    <source>
        <dbReference type="SAM" id="MobiDB-lite"/>
    </source>
</evidence>
<evidence type="ECO:0000269" key="7">
    <source>
    </source>
</evidence>
<accession>Q4ADG6</accession>
<reference key="1">
    <citation type="submission" date="2005-07" db="EMBL/GenBank/DDBJ databases">
        <title>Identification of Mx cDNAs in sea mammals.</title>
        <authorList>
            <person name="Sakamoto A."/>
            <person name="Seyama T."/>
            <person name="Ueda J."/>
            <person name="Watanabe T."/>
        </authorList>
    </citation>
    <scope>NUCLEOTIDE SEQUENCE [MRNA]</scope>
</reference>
<reference key="2">
    <citation type="journal article" date="2007" name="Microbes Infect.">
        <title>The Mx GTPase family of interferon-induced antiviral proteins.</title>
        <authorList>
            <person name="Haller O."/>
            <person name="Stertz S."/>
            <person name="Kochs G."/>
        </authorList>
    </citation>
    <scope>REVIEW</scope>
    <scope>INDUCTION</scope>
</reference>
<organism>
    <name type="scientific">Phoca vitulina</name>
    <name type="common">Harbor seal</name>
    <dbReference type="NCBI Taxonomy" id="9720"/>
    <lineage>
        <taxon>Eukaryota</taxon>
        <taxon>Metazoa</taxon>
        <taxon>Chordata</taxon>
        <taxon>Craniata</taxon>
        <taxon>Vertebrata</taxon>
        <taxon>Euteleostomi</taxon>
        <taxon>Mammalia</taxon>
        <taxon>Eutheria</taxon>
        <taxon>Laurasiatheria</taxon>
        <taxon>Carnivora</taxon>
        <taxon>Caniformia</taxon>
        <taxon>Pinnipedia</taxon>
        <taxon>Phocidae</taxon>
        <taxon>Phocinae</taxon>
        <taxon>Phoca</taxon>
    </lineage>
</organism>
<gene>
    <name type="primary">MX1</name>
    <name type="synonym">MX</name>
</gene>
<protein>
    <recommendedName>
        <fullName>Interferon-induced GTP-binding protein Mx1</fullName>
    </recommendedName>
    <alternativeName>
        <fullName>Myxoma resistance protein 1</fullName>
    </alternativeName>
    <alternativeName>
        <fullName>Myxovirus resistance protein 1</fullName>
    </alternativeName>
</protein>
<proteinExistence type="evidence at transcript level"/>
<sequence length="659" mass="75288">MVNSKGEITDSDPGSNHLLLNGLPDKAGKNQDTEPENSLCSQYEEKVRPCIDLIDSLRALGVEQDLALPAIAVIGDQSSGKSSVLEALSGVALPRGSGIVTRCPLVLKLKKLLNEDEWRGKVSYQDFEMEISDPSEVEVEISKAQNVIAGEGQGISHELISLEVSSPHVPDLTLIDLPGITRVAVGNQPADIGRQTKQLIRKYILKQETINLVVVPCNVDIATTEALSMAQEVDPSGDRTIGILTKPDLVDRGTESKVVDVAQNLVCHLKKGYMIVKCRGQQDIQDQVTLTEALQKERDFFEDHPHFRVLLEEGRATVPCLADKLTSELITHICKTLPLLENQIKENHEKITEELKKYGSDVPEEEHEKMFFLIEKINAFNHDINSLIEGEEFVGEDESRLFTKIRNEFHKWSCVIEKKFQQGYKAIYKQIEKFENRYRGRELPGFVNYKTFEIIIKQQIKELEEPAVYMLHMVTDMVQAAFTDISEANFAEFFNLYRTTKSKIEDIKFELEKEAEKSIRLHFQMEQIVYCQDQVYQRALQRVREKVADEEKNKKINSMSSEEVSSVNISLSEIFEHLLAYRQEATNRISSHIPLIIQYFILQAYGQKLQKGMLQLLQDKDTYNWLLKERSDTSDKRKFLKERLSRLAQARRRLAKFPG</sequence>